<sequence length="325" mass="37031">MIFTSSCCDNLSIDEIIERAEKGDCEAQYIVGFYYNRDSAIDSPDDEKAFYWLKLAAEQGHCEAQYSLGQKYTEDKSRHKDNEQAIFWLKKAALQGHTFASNALGWTLDRGEAPNYKEAVVWYQIAAESGMSYAQNNLGWMYRNGNGVAKDYALAFFWYKQAALQGHSDAQNNLADLYEDGKGVAQNKTLAAFWYLKSAQQGNRHAQFQIAWDYNAGEGVDQDYKQAMYWYLKAAAQGSVGAYVNIGYMYKHGQGVEKDYQAAFEWFTKAAECNDATAWYNLAIMYHYGEGRPVDLRQALDLYRKVQSSGTRDVSQEIRETEDLL</sequence>
<dbReference type="EMBL" id="U82598">
    <property type="protein sequence ID" value="AAB40845.1"/>
    <property type="status" value="ALT_INIT"/>
    <property type="molecule type" value="Genomic_DNA"/>
</dbReference>
<dbReference type="EMBL" id="U00096">
    <property type="protein sequence ID" value="AAC73745.2"/>
    <property type="molecule type" value="Genomic_DNA"/>
</dbReference>
<dbReference type="EMBL" id="AP009048">
    <property type="protein sequence ID" value="BAA35291.2"/>
    <property type="molecule type" value="Genomic_DNA"/>
</dbReference>
<dbReference type="PIR" id="B64799">
    <property type="entry name" value="B64799"/>
</dbReference>
<dbReference type="RefSeq" id="NP_415177.4">
    <property type="nucleotide sequence ID" value="NC_000913.3"/>
</dbReference>
<dbReference type="RefSeq" id="WP_000578178.1">
    <property type="nucleotide sequence ID" value="NZ_SSZK01000037.1"/>
</dbReference>
<dbReference type="SMR" id="P77234"/>
<dbReference type="BioGRID" id="4261862">
    <property type="interactions" value="18"/>
</dbReference>
<dbReference type="BioGRID" id="849633">
    <property type="interactions" value="6"/>
</dbReference>
<dbReference type="FunCoup" id="P77234">
    <property type="interactions" value="207"/>
</dbReference>
<dbReference type="IntAct" id="P77234">
    <property type="interactions" value="6"/>
</dbReference>
<dbReference type="STRING" id="511145.b0644"/>
<dbReference type="PaxDb" id="511145-b0644"/>
<dbReference type="EnsemblBacteria" id="AAC73745">
    <property type="protein sequence ID" value="AAC73745"/>
    <property type="gene ID" value="b0644"/>
</dbReference>
<dbReference type="GeneID" id="945251"/>
<dbReference type="KEGG" id="ecj:JW5091"/>
<dbReference type="KEGG" id="eco:b0644"/>
<dbReference type="KEGG" id="ecoc:C3026_03220"/>
<dbReference type="PATRIC" id="fig|511145.12.peg.675"/>
<dbReference type="EchoBASE" id="EB3411"/>
<dbReference type="eggNOG" id="COG0790">
    <property type="taxonomic scope" value="Bacteria"/>
</dbReference>
<dbReference type="HOGENOM" id="CLU_000288_36_2_6"/>
<dbReference type="InParanoid" id="P77234"/>
<dbReference type="OMA" id="LGIMYME"/>
<dbReference type="OrthoDB" id="9792653at2"/>
<dbReference type="PhylomeDB" id="P77234"/>
<dbReference type="BioCyc" id="EcoCyc:G6351-MONOMER"/>
<dbReference type="PRO" id="PR:P77234"/>
<dbReference type="Proteomes" id="UP000000625">
    <property type="component" value="Chromosome"/>
</dbReference>
<dbReference type="GO" id="GO:0006979">
    <property type="term" value="P:response to oxidative stress"/>
    <property type="evidence" value="ECO:0000315"/>
    <property type="project" value="EcoCyc"/>
</dbReference>
<dbReference type="Gene3D" id="1.25.40.10">
    <property type="entry name" value="Tetratricopeptide repeat domain"/>
    <property type="match status" value="2"/>
</dbReference>
<dbReference type="InterPro" id="IPR006597">
    <property type="entry name" value="Sel1-like"/>
</dbReference>
<dbReference type="InterPro" id="IPR050767">
    <property type="entry name" value="Sel1_AlgK"/>
</dbReference>
<dbReference type="InterPro" id="IPR011990">
    <property type="entry name" value="TPR-like_helical_dom_sf"/>
</dbReference>
<dbReference type="PANTHER" id="PTHR11102:SF160">
    <property type="entry name" value="ERAD-ASSOCIATED E3 UBIQUITIN-PROTEIN LIGASE COMPONENT HRD3"/>
    <property type="match status" value="1"/>
</dbReference>
<dbReference type="PANTHER" id="PTHR11102">
    <property type="entry name" value="SEL-1-LIKE PROTEIN"/>
    <property type="match status" value="1"/>
</dbReference>
<dbReference type="Pfam" id="PF08238">
    <property type="entry name" value="Sel1"/>
    <property type="match status" value="8"/>
</dbReference>
<dbReference type="SMART" id="SM00671">
    <property type="entry name" value="SEL1"/>
    <property type="match status" value="8"/>
</dbReference>
<dbReference type="SUPFAM" id="SSF81901">
    <property type="entry name" value="HCP-like"/>
    <property type="match status" value="2"/>
</dbReference>
<feature type="chain" id="PRO_0000168681" description="Sel1-repeat-containing protein YbeQ">
    <location>
        <begin position="1"/>
        <end position="325"/>
    </location>
</feature>
<feature type="repeat" description="Sel1-like 1" evidence="1">
    <location>
        <begin position="26"/>
        <end position="61"/>
    </location>
</feature>
<feature type="repeat" description="Sel1-like 2" evidence="1">
    <location>
        <begin position="63"/>
        <end position="97"/>
    </location>
</feature>
<feature type="repeat" description="Sel1-like 3" evidence="1">
    <location>
        <begin position="103"/>
        <end position="130"/>
    </location>
</feature>
<feature type="repeat" description="Sel1-like 4" evidence="1">
    <location>
        <begin position="132"/>
        <end position="167"/>
    </location>
</feature>
<feature type="repeat" description="Sel1-like 5" evidence="1">
    <location>
        <begin position="168"/>
        <end position="203"/>
    </location>
</feature>
<feature type="repeat" description="Sel1-like 6" evidence="1">
    <location>
        <begin position="205"/>
        <end position="239"/>
    </location>
</feature>
<feature type="repeat" description="Sel1-like 7" evidence="1">
    <location>
        <begin position="242"/>
        <end position="275"/>
    </location>
</feature>
<feature type="repeat" description="Sel1-like 8" evidence="1">
    <location>
        <begin position="280"/>
        <end position="305"/>
    </location>
</feature>
<accession>P77234</accession>
<evidence type="ECO:0000305" key="1"/>
<proteinExistence type="predicted"/>
<keyword id="KW-1185">Reference proteome</keyword>
<keyword id="KW-0677">Repeat</keyword>
<gene>
    <name type="primary">ybeQ</name>
    <name type="ordered locus">b0644</name>
    <name type="ordered locus">JW5091</name>
</gene>
<reference key="1">
    <citation type="journal article" date="1996" name="DNA Res.">
        <title>A 718-kb DNA sequence of the Escherichia coli K-12 genome corresponding to the 12.7-28.0 min region on the linkage map.</title>
        <authorList>
            <person name="Oshima T."/>
            <person name="Aiba H."/>
            <person name="Baba T."/>
            <person name="Fujita K."/>
            <person name="Hayashi K."/>
            <person name="Honjo A."/>
            <person name="Ikemoto K."/>
            <person name="Inada T."/>
            <person name="Itoh T."/>
            <person name="Kajihara M."/>
            <person name="Kanai K."/>
            <person name="Kashimoto K."/>
            <person name="Kimura S."/>
            <person name="Kitagawa M."/>
            <person name="Makino K."/>
            <person name="Masuda S."/>
            <person name="Miki T."/>
            <person name="Mizobuchi K."/>
            <person name="Mori H."/>
            <person name="Motomura K."/>
            <person name="Nakamura Y."/>
            <person name="Nashimoto H."/>
            <person name="Nishio Y."/>
            <person name="Saito N."/>
            <person name="Sampei G."/>
            <person name="Seki Y."/>
            <person name="Tagami H."/>
            <person name="Takemoto K."/>
            <person name="Wada C."/>
            <person name="Yamamoto Y."/>
            <person name="Yano M."/>
            <person name="Horiuchi T."/>
        </authorList>
    </citation>
    <scope>NUCLEOTIDE SEQUENCE [LARGE SCALE GENOMIC DNA]</scope>
    <source>
        <strain>K12 / W3110 / ATCC 27325 / DSM 5911</strain>
    </source>
</reference>
<reference key="2">
    <citation type="submission" date="1997-01" db="EMBL/GenBank/DDBJ databases">
        <title>Sequence of minutes 4-25 of Escherichia coli.</title>
        <authorList>
            <person name="Chung E."/>
            <person name="Allen E."/>
            <person name="Araujo R."/>
            <person name="Aparicio A.M."/>
            <person name="Davis K."/>
            <person name="Duncan M."/>
            <person name="Federspiel N."/>
            <person name="Hyman R."/>
            <person name="Kalman S."/>
            <person name="Komp C."/>
            <person name="Kurdi O."/>
            <person name="Lew H."/>
            <person name="Lin D."/>
            <person name="Namath A."/>
            <person name="Oefner P."/>
            <person name="Roberts D."/>
            <person name="Schramm S."/>
            <person name="Davis R.W."/>
        </authorList>
    </citation>
    <scope>NUCLEOTIDE SEQUENCE [LARGE SCALE GENOMIC DNA]</scope>
    <source>
        <strain>K12 / MG1655 / ATCC 47076</strain>
    </source>
</reference>
<reference key="3">
    <citation type="journal article" date="1997" name="Science">
        <title>The complete genome sequence of Escherichia coli K-12.</title>
        <authorList>
            <person name="Blattner F.R."/>
            <person name="Plunkett G. III"/>
            <person name="Bloch C.A."/>
            <person name="Perna N.T."/>
            <person name="Burland V."/>
            <person name="Riley M."/>
            <person name="Collado-Vides J."/>
            <person name="Glasner J.D."/>
            <person name="Rode C.K."/>
            <person name="Mayhew G.F."/>
            <person name="Gregor J."/>
            <person name="Davis N.W."/>
            <person name="Kirkpatrick H.A."/>
            <person name="Goeden M.A."/>
            <person name="Rose D.J."/>
            <person name="Mau B."/>
            <person name="Shao Y."/>
        </authorList>
    </citation>
    <scope>NUCLEOTIDE SEQUENCE [LARGE SCALE GENOMIC DNA]</scope>
    <source>
        <strain>K12 / MG1655 / ATCC 47076</strain>
    </source>
</reference>
<reference key="4">
    <citation type="journal article" date="2006" name="Mol. Syst. Biol.">
        <title>Highly accurate genome sequences of Escherichia coli K-12 strains MG1655 and W3110.</title>
        <authorList>
            <person name="Hayashi K."/>
            <person name="Morooka N."/>
            <person name="Yamamoto Y."/>
            <person name="Fujita K."/>
            <person name="Isono K."/>
            <person name="Choi S."/>
            <person name="Ohtsubo E."/>
            <person name="Baba T."/>
            <person name="Wanner B.L."/>
            <person name="Mori H."/>
            <person name="Horiuchi T."/>
        </authorList>
    </citation>
    <scope>NUCLEOTIDE SEQUENCE [LARGE SCALE GENOMIC DNA]</scope>
    <source>
        <strain>K12 / W3110 / ATCC 27325 / DSM 5911</strain>
    </source>
</reference>
<name>YBEQ_ECOLI</name>
<protein>
    <recommendedName>
        <fullName>Sel1-repeat-containing protein YbeQ</fullName>
    </recommendedName>
</protein>
<organism>
    <name type="scientific">Escherichia coli (strain K12)</name>
    <dbReference type="NCBI Taxonomy" id="83333"/>
    <lineage>
        <taxon>Bacteria</taxon>
        <taxon>Pseudomonadati</taxon>
        <taxon>Pseudomonadota</taxon>
        <taxon>Gammaproteobacteria</taxon>
        <taxon>Enterobacterales</taxon>
        <taxon>Enterobacteriaceae</taxon>
        <taxon>Escherichia</taxon>
    </lineage>
</organism>
<comment type="similarity">
    <text evidence="1">To E.coli YbeT.</text>
</comment>
<comment type="sequence caution" evidence="1">
    <conflict type="erroneous initiation">
        <sequence resource="EMBL-CDS" id="AAB40845"/>
    </conflict>
    <text>Extended N-terminus.</text>
</comment>